<proteinExistence type="inferred from homology"/>
<feature type="chain" id="PRO_1000188513" description="HMP-PP phosphatase">
    <location>
        <begin position="1"/>
        <end position="272"/>
    </location>
</feature>
<feature type="active site" description="Nucleophile" evidence="1">
    <location>
        <position position="8"/>
    </location>
</feature>
<feature type="binding site" evidence="1">
    <location>
        <position position="8"/>
    </location>
    <ligand>
        <name>Mg(2+)</name>
        <dbReference type="ChEBI" id="CHEBI:18420"/>
    </ligand>
</feature>
<feature type="binding site" evidence="1">
    <location>
        <position position="10"/>
    </location>
    <ligand>
        <name>Mg(2+)</name>
        <dbReference type="ChEBI" id="CHEBI:18420"/>
    </ligand>
</feature>
<feature type="binding site" evidence="1">
    <location>
        <position position="212"/>
    </location>
    <ligand>
        <name>Mg(2+)</name>
        <dbReference type="ChEBI" id="CHEBI:18420"/>
    </ligand>
</feature>
<reference key="1">
    <citation type="journal article" date="2011" name="J. Bacteriol.">
        <title>Comparative genomics of 28 Salmonella enterica isolates: evidence for CRISPR-mediated adaptive sublineage evolution.</title>
        <authorList>
            <person name="Fricke W.F."/>
            <person name="Mammel M.K."/>
            <person name="McDermott P.F."/>
            <person name="Tartera C."/>
            <person name="White D.G."/>
            <person name="Leclerc J.E."/>
            <person name="Ravel J."/>
            <person name="Cebula T.A."/>
        </authorList>
    </citation>
    <scope>NUCLEOTIDE SEQUENCE [LARGE SCALE GENOMIC DNA]</scope>
    <source>
        <strain>CVM19633</strain>
    </source>
</reference>
<comment type="function">
    <text evidence="1">Catalyzes the hydrolysis of 4-amino-2-methyl-5-hydroxymethylpyrimidine pyrophosphate (HMP-PP) to 4-amino-2-methyl-5-hydroxymethylpyrimidine phosphate (HMP-P).</text>
</comment>
<comment type="catalytic activity">
    <reaction evidence="1">
        <text>4-amino-2-methyl-5-(diphosphooxymethyl)pyrimidine + H2O = 4-amino-2-methyl-5-(phosphooxymethyl)pyrimidine + phosphate + H(+)</text>
        <dbReference type="Rhea" id="RHEA:27914"/>
        <dbReference type="ChEBI" id="CHEBI:15377"/>
        <dbReference type="ChEBI" id="CHEBI:15378"/>
        <dbReference type="ChEBI" id="CHEBI:43474"/>
        <dbReference type="ChEBI" id="CHEBI:57841"/>
        <dbReference type="ChEBI" id="CHEBI:58354"/>
    </reaction>
</comment>
<comment type="cofactor">
    <cofactor evidence="1">
        <name>Mg(2+)</name>
        <dbReference type="ChEBI" id="CHEBI:18420"/>
    </cofactor>
</comment>
<comment type="similarity">
    <text evidence="1">Belongs to the HAD-like hydrolase superfamily. Cof family.</text>
</comment>
<name>COF_SALSV</name>
<accession>B4TMD5</accession>
<organism>
    <name type="scientific">Salmonella schwarzengrund (strain CVM19633)</name>
    <dbReference type="NCBI Taxonomy" id="439843"/>
    <lineage>
        <taxon>Bacteria</taxon>
        <taxon>Pseudomonadati</taxon>
        <taxon>Pseudomonadota</taxon>
        <taxon>Gammaproteobacteria</taxon>
        <taxon>Enterobacterales</taxon>
        <taxon>Enterobacteriaceae</taxon>
        <taxon>Salmonella</taxon>
    </lineage>
</organism>
<keyword id="KW-0378">Hydrolase</keyword>
<keyword id="KW-0460">Magnesium</keyword>
<keyword id="KW-0479">Metal-binding</keyword>
<dbReference type="EC" id="3.6.1.-" evidence="1"/>
<dbReference type="EMBL" id="CP001127">
    <property type="protein sequence ID" value="ACF88987.1"/>
    <property type="molecule type" value="Genomic_DNA"/>
</dbReference>
<dbReference type="RefSeq" id="WP_000113032.1">
    <property type="nucleotide sequence ID" value="NC_011094.1"/>
</dbReference>
<dbReference type="SMR" id="B4TMD5"/>
<dbReference type="KEGG" id="sew:SeSA_A0516"/>
<dbReference type="HOGENOM" id="CLU_044146_5_2_6"/>
<dbReference type="Proteomes" id="UP000001865">
    <property type="component" value="Chromosome"/>
</dbReference>
<dbReference type="GO" id="GO:0002145">
    <property type="term" value="F:4-amino-5-hydroxymethyl-2-methylpyrimidine diphosphatase activity"/>
    <property type="evidence" value="ECO:0007669"/>
    <property type="project" value="RHEA"/>
</dbReference>
<dbReference type="GO" id="GO:0000287">
    <property type="term" value="F:magnesium ion binding"/>
    <property type="evidence" value="ECO:0000250"/>
    <property type="project" value="UniProtKB"/>
</dbReference>
<dbReference type="GO" id="GO:0016791">
    <property type="term" value="F:phosphatase activity"/>
    <property type="evidence" value="ECO:0000250"/>
    <property type="project" value="UniProtKB"/>
</dbReference>
<dbReference type="CDD" id="cd07516">
    <property type="entry name" value="HAD_Pase"/>
    <property type="match status" value="1"/>
</dbReference>
<dbReference type="FunFam" id="3.30.1240.10:FF:000002">
    <property type="entry name" value="HMP-PP phosphatase"/>
    <property type="match status" value="1"/>
</dbReference>
<dbReference type="Gene3D" id="3.30.1240.10">
    <property type="match status" value="1"/>
</dbReference>
<dbReference type="Gene3D" id="3.40.50.1000">
    <property type="entry name" value="HAD superfamily/HAD-like"/>
    <property type="match status" value="1"/>
</dbReference>
<dbReference type="HAMAP" id="MF_01847">
    <property type="entry name" value="HMP_PP_phosphat"/>
    <property type="match status" value="1"/>
</dbReference>
<dbReference type="InterPro" id="IPR000150">
    <property type="entry name" value="Cof"/>
</dbReference>
<dbReference type="InterPro" id="IPR036412">
    <property type="entry name" value="HAD-like_sf"/>
</dbReference>
<dbReference type="InterPro" id="IPR006379">
    <property type="entry name" value="HAD-SF_hydro_IIB"/>
</dbReference>
<dbReference type="InterPro" id="IPR023214">
    <property type="entry name" value="HAD_sf"/>
</dbReference>
<dbReference type="InterPro" id="IPR023938">
    <property type="entry name" value="HMP-PP_phosphatase"/>
</dbReference>
<dbReference type="NCBIfam" id="TIGR00099">
    <property type="entry name" value="Cof-subfamily"/>
    <property type="match status" value="1"/>
</dbReference>
<dbReference type="NCBIfam" id="TIGR01484">
    <property type="entry name" value="HAD-SF-IIB"/>
    <property type="match status" value="1"/>
</dbReference>
<dbReference type="NCBIfam" id="NF011705">
    <property type="entry name" value="PRK15126.1"/>
    <property type="match status" value="1"/>
</dbReference>
<dbReference type="PANTHER" id="PTHR47267">
    <property type="match status" value="1"/>
</dbReference>
<dbReference type="PANTHER" id="PTHR47267:SF2">
    <property type="entry name" value="HMP-PP PHOSPHATASE"/>
    <property type="match status" value="1"/>
</dbReference>
<dbReference type="Pfam" id="PF08282">
    <property type="entry name" value="Hydrolase_3"/>
    <property type="match status" value="1"/>
</dbReference>
<dbReference type="SFLD" id="SFLDG01140">
    <property type="entry name" value="C2.B:_Phosphomannomutase_and_P"/>
    <property type="match status" value="1"/>
</dbReference>
<dbReference type="SFLD" id="SFLDS00003">
    <property type="entry name" value="Haloacid_Dehalogenase"/>
    <property type="match status" value="1"/>
</dbReference>
<dbReference type="SUPFAM" id="SSF56784">
    <property type="entry name" value="HAD-like"/>
    <property type="match status" value="1"/>
</dbReference>
<dbReference type="PROSITE" id="PS01228">
    <property type="entry name" value="COF_1"/>
    <property type="match status" value="1"/>
</dbReference>
<dbReference type="PROSITE" id="PS01229">
    <property type="entry name" value="COF_2"/>
    <property type="match status" value="1"/>
</dbReference>
<sequence length="272" mass="30105">MARLAAFDMDGTLLMPDHHLGRETIATLARLRERDITLTFATGRHVLEMRHILGTLSLDAYLITGNGTRIHSLEGDVLHRQDLDPQVADTVMHHAWDTRASMHVFNDNGWFTGQEIPALLQAHVYSGFRYQVINIKSIPAHQVTKICFCGDHDDLIRLRIQLNEAMEERAHLCFSAVDCLEVLPLGCNKGSALAVLSNHLGLSLADCMAFGDAMNDREMLGSVGRGLIMGNAMPQLIAALPHLAVIGHCGNQAVSHFLTHWLDNPHLPYSPE</sequence>
<evidence type="ECO:0000255" key="1">
    <source>
        <dbReference type="HAMAP-Rule" id="MF_01847"/>
    </source>
</evidence>
<protein>
    <recommendedName>
        <fullName evidence="1">HMP-PP phosphatase</fullName>
        <ecNumber evidence="1">3.6.1.-</ecNumber>
    </recommendedName>
</protein>
<gene>
    <name evidence="1" type="primary">cof</name>
    <name type="ordered locus">SeSA_A0516</name>
</gene>